<gene>
    <name evidence="1" type="primary">apt</name>
    <name type="ordered locus">PBPRA1016</name>
</gene>
<protein>
    <recommendedName>
        <fullName evidence="1">Adenine phosphoribosyltransferase</fullName>
        <shortName evidence="1">APRT</shortName>
        <ecNumber evidence="1">2.4.2.7</ecNumber>
    </recommendedName>
</protein>
<feature type="chain" id="PRO_0000149428" description="Adenine phosphoribosyltransferase">
    <location>
        <begin position="1"/>
        <end position="174"/>
    </location>
</feature>
<keyword id="KW-0963">Cytoplasm</keyword>
<keyword id="KW-0328">Glycosyltransferase</keyword>
<keyword id="KW-0660">Purine salvage</keyword>
<keyword id="KW-1185">Reference proteome</keyword>
<keyword id="KW-0808">Transferase</keyword>
<sequence length="174" mass="18892">MIRNSIKSISDYPKPGILFRDVTSLMEDPEAYRATMQVLIERYSNTGITKVIGTEARGFLFGAPLALELGVGFVPVRKPGKLPREVISESYELEYGKDILEIHVDAIVEGDKVLLVDDLLATGGTIEATTKLARRLGGVVEDAAFVINLPDIGGAERLKGIGLNVFSICDFDGH</sequence>
<dbReference type="EC" id="2.4.2.7" evidence="1"/>
<dbReference type="EMBL" id="CR378666">
    <property type="protein sequence ID" value="CAG19427.1"/>
    <property type="molecule type" value="Genomic_DNA"/>
</dbReference>
<dbReference type="SMR" id="Q6LTE9"/>
<dbReference type="STRING" id="298386.PBPRA1016"/>
<dbReference type="KEGG" id="ppr:PBPRA1016"/>
<dbReference type="eggNOG" id="COG0503">
    <property type="taxonomic scope" value="Bacteria"/>
</dbReference>
<dbReference type="HOGENOM" id="CLU_063339_3_0_6"/>
<dbReference type="UniPathway" id="UPA00588">
    <property type="reaction ID" value="UER00646"/>
</dbReference>
<dbReference type="Proteomes" id="UP000000593">
    <property type="component" value="Chromosome 1"/>
</dbReference>
<dbReference type="GO" id="GO:0005829">
    <property type="term" value="C:cytosol"/>
    <property type="evidence" value="ECO:0007669"/>
    <property type="project" value="TreeGrafter"/>
</dbReference>
<dbReference type="GO" id="GO:0003999">
    <property type="term" value="F:adenine phosphoribosyltransferase activity"/>
    <property type="evidence" value="ECO:0007669"/>
    <property type="project" value="UniProtKB-UniRule"/>
</dbReference>
<dbReference type="GO" id="GO:0006168">
    <property type="term" value="P:adenine salvage"/>
    <property type="evidence" value="ECO:0007669"/>
    <property type="project" value="InterPro"/>
</dbReference>
<dbReference type="GO" id="GO:0044209">
    <property type="term" value="P:AMP salvage"/>
    <property type="evidence" value="ECO:0007669"/>
    <property type="project" value="UniProtKB-UniRule"/>
</dbReference>
<dbReference type="GO" id="GO:0006166">
    <property type="term" value="P:purine ribonucleoside salvage"/>
    <property type="evidence" value="ECO:0007669"/>
    <property type="project" value="UniProtKB-KW"/>
</dbReference>
<dbReference type="CDD" id="cd06223">
    <property type="entry name" value="PRTases_typeI"/>
    <property type="match status" value="1"/>
</dbReference>
<dbReference type="FunFam" id="3.40.50.2020:FF:000004">
    <property type="entry name" value="Adenine phosphoribosyltransferase"/>
    <property type="match status" value="1"/>
</dbReference>
<dbReference type="Gene3D" id="3.40.50.2020">
    <property type="match status" value="1"/>
</dbReference>
<dbReference type="HAMAP" id="MF_00004">
    <property type="entry name" value="Aden_phosphoribosyltr"/>
    <property type="match status" value="1"/>
</dbReference>
<dbReference type="InterPro" id="IPR005764">
    <property type="entry name" value="Ade_phspho_trans"/>
</dbReference>
<dbReference type="InterPro" id="IPR050120">
    <property type="entry name" value="Adenine_PRTase"/>
</dbReference>
<dbReference type="InterPro" id="IPR000836">
    <property type="entry name" value="PRibTrfase_dom"/>
</dbReference>
<dbReference type="InterPro" id="IPR029057">
    <property type="entry name" value="PRTase-like"/>
</dbReference>
<dbReference type="NCBIfam" id="TIGR01090">
    <property type="entry name" value="apt"/>
    <property type="match status" value="1"/>
</dbReference>
<dbReference type="NCBIfam" id="NF002632">
    <property type="entry name" value="PRK02304.1-1"/>
    <property type="match status" value="1"/>
</dbReference>
<dbReference type="NCBIfam" id="NF002634">
    <property type="entry name" value="PRK02304.1-3"/>
    <property type="match status" value="1"/>
</dbReference>
<dbReference type="NCBIfam" id="NF002636">
    <property type="entry name" value="PRK02304.1-5"/>
    <property type="match status" value="1"/>
</dbReference>
<dbReference type="PANTHER" id="PTHR11776">
    <property type="entry name" value="ADENINE PHOSPHORIBOSYLTRANSFERASE"/>
    <property type="match status" value="1"/>
</dbReference>
<dbReference type="PANTHER" id="PTHR11776:SF7">
    <property type="entry name" value="PHOSPHORIBOSYLTRANSFERASE DOMAIN-CONTAINING PROTEIN"/>
    <property type="match status" value="1"/>
</dbReference>
<dbReference type="Pfam" id="PF00156">
    <property type="entry name" value="Pribosyltran"/>
    <property type="match status" value="1"/>
</dbReference>
<dbReference type="SUPFAM" id="SSF53271">
    <property type="entry name" value="PRTase-like"/>
    <property type="match status" value="1"/>
</dbReference>
<dbReference type="PROSITE" id="PS00103">
    <property type="entry name" value="PUR_PYR_PR_TRANSFER"/>
    <property type="match status" value="1"/>
</dbReference>
<accession>Q6LTE9</accession>
<evidence type="ECO:0000255" key="1">
    <source>
        <dbReference type="HAMAP-Rule" id="MF_00004"/>
    </source>
</evidence>
<proteinExistence type="inferred from homology"/>
<comment type="function">
    <text evidence="1">Catalyzes a salvage reaction resulting in the formation of AMP, that is energically less costly than de novo synthesis.</text>
</comment>
<comment type="catalytic activity">
    <reaction evidence="1">
        <text>AMP + diphosphate = 5-phospho-alpha-D-ribose 1-diphosphate + adenine</text>
        <dbReference type="Rhea" id="RHEA:16609"/>
        <dbReference type="ChEBI" id="CHEBI:16708"/>
        <dbReference type="ChEBI" id="CHEBI:33019"/>
        <dbReference type="ChEBI" id="CHEBI:58017"/>
        <dbReference type="ChEBI" id="CHEBI:456215"/>
        <dbReference type="EC" id="2.4.2.7"/>
    </reaction>
</comment>
<comment type="pathway">
    <text evidence="1">Purine metabolism; AMP biosynthesis via salvage pathway; AMP from adenine: step 1/1.</text>
</comment>
<comment type="subunit">
    <text evidence="1">Homodimer.</text>
</comment>
<comment type="subcellular location">
    <subcellularLocation>
        <location evidence="1">Cytoplasm</location>
    </subcellularLocation>
</comment>
<comment type="similarity">
    <text evidence="1">Belongs to the purine/pyrimidine phosphoribosyltransferase family.</text>
</comment>
<name>APT_PHOPR</name>
<reference key="1">
    <citation type="journal article" date="2005" name="Science">
        <title>Life at depth: Photobacterium profundum genome sequence and expression analysis.</title>
        <authorList>
            <person name="Vezzi A."/>
            <person name="Campanaro S."/>
            <person name="D'Angelo M."/>
            <person name="Simonato F."/>
            <person name="Vitulo N."/>
            <person name="Lauro F.M."/>
            <person name="Cestaro A."/>
            <person name="Malacrida G."/>
            <person name="Simionati B."/>
            <person name="Cannata N."/>
            <person name="Romualdi C."/>
            <person name="Bartlett D.H."/>
            <person name="Valle G."/>
        </authorList>
    </citation>
    <scope>NUCLEOTIDE SEQUENCE [LARGE SCALE GENOMIC DNA]</scope>
    <source>
        <strain>ATCC BAA-1253 / SS9</strain>
    </source>
</reference>
<organism>
    <name type="scientific">Photobacterium profundum (strain SS9)</name>
    <dbReference type="NCBI Taxonomy" id="298386"/>
    <lineage>
        <taxon>Bacteria</taxon>
        <taxon>Pseudomonadati</taxon>
        <taxon>Pseudomonadota</taxon>
        <taxon>Gammaproteobacteria</taxon>
        <taxon>Vibrionales</taxon>
        <taxon>Vibrionaceae</taxon>
        <taxon>Photobacterium</taxon>
    </lineage>
</organism>